<accession>J3BZS6</accession>
<proteinExistence type="evidence at protein level"/>
<gene>
    <name evidence="6" type="ORF">PMI10_03368</name>
</gene>
<keyword id="KW-0002">3D-structure</keyword>
<keyword id="KW-0223">Dioxygenase</keyword>
<keyword id="KW-0408">Iron</keyword>
<keyword id="KW-0479">Metal-binding</keyword>
<keyword id="KW-0560">Oxidoreductase</keyword>
<dbReference type="EC" id="1.14.11.-" evidence="2"/>
<dbReference type="EMBL" id="AKJZ01000057">
    <property type="protein sequence ID" value="EJL61441.1"/>
    <property type="molecule type" value="Genomic_DNA"/>
</dbReference>
<dbReference type="RefSeq" id="WP_007810048.1">
    <property type="nucleotide sequence ID" value="NZ_AKJZ01000057.1"/>
</dbReference>
<dbReference type="PDB" id="6EUO">
    <property type="method" value="X-ray"/>
    <property type="resolution" value="2.30 A"/>
    <property type="chains" value="A/B/C/D=1-372"/>
</dbReference>
<dbReference type="PDB" id="6EUR">
    <property type="method" value="X-ray"/>
    <property type="resolution" value="2.30 A"/>
    <property type="chains" value="A/B/C/D=1-372"/>
</dbReference>
<dbReference type="PDB" id="6EXF">
    <property type="method" value="X-ray"/>
    <property type="resolution" value="1.95 A"/>
    <property type="chains" value="A/B/C/D=1-372"/>
</dbReference>
<dbReference type="PDB" id="6EXH">
    <property type="method" value="X-ray"/>
    <property type="resolution" value="2.60 A"/>
    <property type="chains" value="A/B/C/D=1-372"/>
</dbReference>
<dbReference type="PDB" id="6F9P">
    <property type="method" value="X-ray"/>
    <property type="resolution" value="2.40 A"/>
    <property type="chains" value="A/B/C/D=1-372"/>
</dbReference>
<dbReference type="PDBsum" id="6EUO"/>
<dbReference type="PDBsum" id="6EUR"/>
<dbReference type="PDBsum" id="6EXF"/>
<dbReference type="PDBsum" id="6EXH"/>
<dbReference type="PDBsum" id="6F9P"/>
<dbReference type="SMR" id="J3BZS6"/>
<dbReference type="STRING" id="1144313.PMI10_03368"/>
<dbReference type="PATRIC" id="fig|1144313.4.peg.3352"/>
<dbReference type="eggNOG" id="COG2175">
    <property type="taxonomic scope" value="Bacteria"/>
</dbReference>
<dbReference type="OrthoDB" id="1265925at2"/>
<dbReference type="Proteomes" id="UP000007287">
    <property type="component" value="Unassembled WGS sequence"/>
</dbReference>
<dbReference type="GO" id="GO:0016706">
    <property type="term" value="F:2-oxoglutarate-dependent dioxygenase activity"/>
    <property type="evidence" value="ECO:0000314"/>
    <property type="project" value="UniProtKB"/>
</dbReference>
<dbReference type="GO" id="GO:0046872">
    <property type="term" value="F:metal ion binding"/>
    <property type="evidence" value="ECO:0007669"/>
    <property type="project" value="UniProtKB-KW"/>
</dbReference>
<dbReference type="FunFam" id="3.60.130.10:FF:000027">
    <property type="entry name" value="L-lysine 4-hydroxylase"/>
    <property type="match status" value="1"/>
</dbReference>
<dbReference type="Gene3D" id="3.60.130.10">
    <property type="entry name" value="Clavaminate synthase-like"/>
    <property type="match status" value="1"/>
</dbReference>
<dbReference type="InterPro" id="IPR042098">
    <property type="entry name" value="TauD-like_sf"/>
</dbReference>
<dbReference type="SUPFAM" id="SSF51197">
    <property type="entry name" value="Clavaminate synthase-like"/>
    <property type="match status" value="1"/>
</dbReference>
<comment type="function">
    <text evidence="2">Alpha-ketoglutarate-dependent dioxygenase that in vitro catalyzes the regio- and stereoselective hydroxylation of L-lysine, leading to (4R)-4-hydroxy-L-lysine.</text>
</comment>
<comment type="catalytic activity">
    <reaction evidence="2">
        <text>L-lysine + 2-oxoglutarate + O2 = (4R)-4-hydroxy-L-lysine + succinate + CO2</text>
        <dbReference type="Rhea" id="RHEA:42420"/>
        <dbReference type="ChEBI" id="CHEBI:15379"/>
        <dbReference type="ChEBI" id="CHEBI:16526"/>
        <dbReference type="ChEBI" id="CHEBI:16810"/>
        <dbReference type="ChEBI" id="CHEBI:30031"/>
        <dbReference type="ChEBI" id="CHEBI:32551"/>
        <dbReference type="ChEBI" id="CHEBI:77410"/>
    </reaction>
</comment>
<comment type="cofactor">
    <cofactor evidence="1">
        <name>Fe(2+)</name>
        <dbReference type="ChEBI" id="CHEBI:29033"/>
    </cofactor>
    <text evidence="1">Binds 1 Fe(2+) ion per subunit.</text>
</comment>
<comment type="similarity">
    <text evidence="4">Belongs to the clavaminate synthase family.</text>
</comment>
<feature type="chain" id="PRO_0000435696" description="L-lysine 4-hydroxylase">
    <location>
        <begin position="1"/>
        <end position="372"/>
    </location>
</feature>
<feature type="binding site" evidence="1">
    <location>
        <position position="176"/>
    </location>
    <ligand>
        <name>Fe cation</name>
        <dbReference type="ChEBI" id="CHEBI:24875"/>
    </ligand>
</feature>
<feature type="binding site" evidence="1">
    <location>
        <position position="178"/>
    </location>
    <ligand>
        <name>Fe cation</name>
        <dbReference type="ChEBI" id="CHEBI:24875"/>
    </ligand>
</feature>
<feature type="binding site" evidence="1">
    <location>
        <position position="312"/>
    </location>
    <ligand>
        <name>Fe cation</name>
        <dbReference type="ChEBI" id="CHEBI:24875"/>
    </ligand>
</feature>
<feature type="strand" evidence="8">
    <location>
        <begin position="26"/>
        <end position="29"/>
    </location>
</feature>
<feature type="helix" evidence="8">
    <location>
        <begin position="32"/>
        <end position="49"/>
    </location>
</feature>
<feature type="helix" evidence="8">
    <location>
        <begin position="55"/>
        <end position="59"/>
    </location>
</feature>
<feature type="helix" evidence="8">
    <location>
        <begin position="61"/>
        <end position="68"/>
    </location>
</feature>
<feature type="helix" evidence="8">
    <location>
        <begin position="71"/>
        <end position="81"/>
    </location>
</feature>
<feature type="strand" evidence="8">
    <location>
        <begin position="90"/>
        <end position="95"/>
    </location>
</feature>
<feature type="helix" evidence="8">
    <location>
        <begin position="102"/>
        <end position="105"/>
    </location>
</feature>
<feature type="helix" evidence="8">
    <location>
        <begin position="112"/>
        <end position="114"/>
    </location>
</feature>
<feature type="helix" evidence="8">
    <location>
        <begin position="117"/>
        <end position="132"/>
    </location>
</feature>
<feature type="turn" evidence="8">
    <location>
        <begin position="133"/>
        <end position="135"/>
    </location>
</feature>
<feature type="strand" evidence="8">
    <location>
        <begin position="137"/>
        <end position="141"/>
    </location>
</feature>
<feature type="turn" evidence="8">
    <location>
        <begin position="142"/>
        <end position="146"/>
    </location>
</feature>
<feature type="strand" evidence="8">
    <location>
        <begin position="150"/>
        <end position="154"/>
    </location>
</feature>
<feature type="helix" evidence="8">
    <location>
        <begin position="158"/>
        <end position="160"/>
    </location>
</feature>
<feature type="strand" evidence="8">
    <location>
        <begin position="163"/>
        <end position="165"/>
    </location>
</feature>
<feature type="strand" evidence="7">
    <location>
        <begin position="173"/>
        <end position="176"/>
    </location>
</feature>
<feature type="turn" evidence="8">
    <location>
        <begin position="178"/>
        <end position="181"/>
    </location>
</feature>
<feature type="strand" evidence="8">
    <location>
        <begin position="187"/>
        <end position="195"/>
    </location>
</feature>
<feature type="strand" evidence="8">
    <location>
        <begin position="202"/>
        <end position="206"/>
    </location>
</feature>
<feature type="helix" evidence="8">
    <location>
        <begin position="207"/>
        <end position="210"/>
    </location>
</feature>
<feature type="helix" evidence="8">
    <location>
        <begin position="215"/>
        <end position="218"/>
    </location>
</feature>
<feature type="helix" evidence="8">
    <location>
        <begin position="219"/>
        <end position="221"/>
    </location>
</feature>
<feature type="strand" evidence="8">
    <location>
        <begin position="247"/>
        <end position="250"/>
    </location>
</feature>
<feature type="strand" evidence="8">
    <location>
        <begin position="252"/>
        <end position="257"/>
    </location>
</feature>
<feature type="helix" evidence="8">
    <location>
        <begin position="261"/>
        <end position="264"/>
    </location>
</feature>
<feature type="helix" evidence="7">
    <location>
        <begin position="268"/>
        <end position="270"/>
    </location>
</feature>
<feature type="helix" evidence="8">
    <location>
        <begin position="274"/>
        <end position="287"/>
    </location>
</feature>
<feature type="helix" evidence="8">
    <location>
        <begin position="288"/>
        <end position="290"/>
    </location>
</feature>
<feature type="strand" evidence="8">
    <location>
        <begin position="302"/>
        <end position="306"/>
    </location>
</feature>
<feature type="turn" evidence="8">
    <location>
        <begin position="307"/>
        <end position="309"/>
    </location>
</feature>
<feature type="strand" evidence="8">
    <location>
        <begin position="310"/>
        <end position="314"/>
    </location>
</feature>
<feature type="strand" evidence="8">
    <location>
        <begin position="321"/>
        <end position="324"/>
    </location>
</feature>
<feature type="strand" evidence="8">
    <location>
        <begin position="327"/>
        <end position="330"/>
    </location>
</feature>
<feature type="strand" evidence="8">
    <location>
        <begin position="335"/>
        <end position="343"/>
    </location>
</feature>
<feature type="turn" evidence="8">
    <location>
        <begin position="345"/>
        <end position="348"/>
    </location>
</feature>
<feature type="helix" evidence="8">
    <location>
        <begin position="349"/>
        <end position="351"/>
    </location>
</feature>
<feature type="strand" evidence="8">
    <location>
        <begin position="356"/>
        <end position="360"/>
    </location>
</feature>
<feature type="strand" evidence="8">
    <location>
        <begin position="362"/>
        <end position="364"/>
    </location>
</feature>
<organism>
    <name type="scientific">Flavobacterium sp. (strain CF136)</name>
    <dbReference type="NCBI Taxonomy" id="1144313"/>
    <lineage>
        <taxon>Bacteria</taxon>
        <taxon>Pseudomonadati</taxon>
        <taxon>Bacteroidota</taxon>
        <taxon>Flavobacteriia</taxon>
        <taxon>Flavobacteriales</taxon>
        <taxon>Flavobacteriaceae</taxon>
        <taxon>Flavobacterium</taxon>
    </lineage>
</organism>
<name>LYS4O_FLASC</name>
<evidence type="ECO:0000250" key="1">
    <source>
        <dbReference type="UniProtKB" id="Q9Z4Z5"/>
    </source>
</evidence>
<evidence type="ECO:0000269" key="2">
    <source ref="2"/>
</evidence>
<evidence type="ECO:0000303" key="3">
    <source ref="2"/>
</evidence>
<evidence type="ECO:0000305" key="4"/>
<evidence type="ECO:0000305" key="5">
    <source ref="2"/>
</evidence>
<evidence type="ECO:0000312" key="6">
    <source>
        <dbReference type="EMBL" id="EJL61441.1"/>
    </source>
</evidence>
<evidence type="ECO:0007829" key="7">
    <source>
        <dbReference type="PDB" id="6EUO"/>
    </source>
</evidence>
<evidence type="ECO:0007829" key="8">
    <source>
        <dbReference type="PDB" id="6EXF"/>
    </source>
</evidence>
<sequence>MKSQSIMSVERSAETSLTLEIPTSPLIIKITQQERNILSNVGNLLVKAFGNYENPDYIASLHLHAFQLLPERITRILSQFGSDFSAEQYGAIVFQGLIEVDQDDLGPTPPNWQGADYGKLNKYGFICSLLHGAVPSKPVQYYAQRKGGGLLHAVIPDEKMAATQTGSGSKTDLFVHTEDAFLSNQADFLSFLYLRNEERVPSTLYSIRSHGKMNPVMKKLFEPIYQCPKDANYNDEDVANSGPTASVLYGNRELPFIRFDAAEQIFNENAGQTSEALGNLMDFWDEAKTLINSDYIPNSGDLIFVNNHLCAHGRSAFIAGQRIENGEIIKCERRQMLRMMSKTSLIHIRSVTRTDDPYFIMEEHLGKIFDLD</sequence>
<reference key="1">
    <citation type="journal article" date="2012" name="J. Bacteriol.">
        <title>Twenty-one genome sequences from Pseudomonas species and 19 genome sequences from diverse bacteria isolated from the rhizosphere and endosphere of Populus deltoides.</title>
        <authorList>
            <person name="Brown S.D."/>
            <person name="Utturkar S.M."/>
            <person name="Klingeman D.M."/>
            <person name="Johnson C.M."/>
            <person name="Martin S.L."/>
            <person name="Land M.L."/>
            <person name="Lu T.Y."/>
            <person name="Schadt C.W."/>
            <person name="Doktycz M.J."/>
            <person name="Pelletier D.A."/>
        </authorList>
    </citation>
    <scope>NUCLEOTIDE SEQUENCE [LARGE SCALE GENOMIC DNA]</scope>
    <source>
        <strain>CF136</strain>
    </source>
</reference>
<reference key="2">
    <citation type="journal article" date="2014" name="ChemCatChem">
        <title>Synthesis of mono- and dihydroxylated amino acids with new alpha-ketoglutarate-dependent dioxygenases: biocatalytic oxidation of C-H bonds.</title>
        <authorList>
            <person name="Baud D."/>
            <person name="Saaidi P.-L."/>
            <person name="Monfleur A."/>
            <person name="Harari M."/>
            <person name="Cuccaro J."/>
            <person name="Fossey A."/>
            <person name="Besnard M."/>
            <person name="Debard A."/>
            <person name="Mariage A."/>
            <person name="Pellouin V."/>
            <person name="Petit J.-L."/>
            <person name="Salanoubat M."/>
            <person name="Weissenbach J."/>
            <person name="de Berardinis V."/>
            <person name="Zaparucha A."/>
        </authorList>
    </citation>
    <scope>FUNCTION</scope>
    <scope>CATALYTIC ACTIVITY</scope>
</reference>
<protein>
    <recommendedName>
        <fullName evidence="5">L-lysine 4-hydroxylase</fullName>
        <ecNumber evidence="2">1.14.11.-</ecNumber>
    </recommendedName>
    <alternativeName>
        <fullName evidence="3">Alpha-ketoglutarate-dependent dioxygenase</fullName>
    </alternativeName>
    <alternativeName>
        <fullName evidence="3">KDO5</fullName>
    </alternativeName>
    <alternativeName>
        <fullName evidence="3">L-lysine hydroxylase</fullName>
    </alternativeName>
</protein>